<organism>
    <name type="scientific">Caenorhabditis briggsae</name>
    <dbReference type="NCBI Taxonomy" id="6238"/>
    <lineage>
        <taxon>Eukaryota</taxon>
        <taxon>Metazoa</taxon>
        <taxon>Ecdysozoa</taxon>
        <taxon>Nematoda</taxon>
        <taxon>Chromadorea</taxon>
        <taxon>Rhabditida</taxon>
        <taxon>Rhabditina</taxon>
        <taxon>Rhabditomorpha</taxon>
        <taxon>Rhabditoidea</taxon>
        <taxon>Rhabditidae</taxon>
        <taxon>Peloderinae</taxon>
        <taxon>Caenorhabditis</taxon>
    </lineage>
</organism>
<evidence type="ECO:0000250" key="1">
    <source>
        <dbReference type="UniProtKB" id="P62304"/>
    </source>
</evidence>
<evidence type="ECO:0000255" key="2">
    <source>
        <dbReference type="PROSITE-ProRule" id="PRU01346"/>
    </source>
</evidence>
<evidence type="ECO:0000305" key="3"/>
<keyword id="KW-0963">Cytoplasm</keyword>
<keyword id="KW-0507">mRNA processing</keyword>
<keyword id="KW-0508">mRNA splicing</keyword>
<keyword id="KW-0539">Nucleus</keyword>
<keyword id="KW-1185">Reference proteome</keyword>
<keyword id="KW-0687">Ribonucleoprotein</keyword>
<keyword id="KW-0694">RNA-binding</keyword>
<keyword id="KW-0747">Spliceosome</keyword>
<feature type="chain" id="PRO_0000340652" description="Probable small nuclear ribonucleoprotein E">
    <location>
        <begin position="1"/>
        <end position="90"/>
    </location>
</feature>
<feature type="domain" description="Sm" evidence="2">
    <location>
        <begin position="14"/>
        <end position="89"/>
    </location>
</feature>
<proteinExistence type="inferred from homology"/>
<sequence>MSQRKIQKVMVQPVNLIFRYLQNRTRVQIWLYEDVTHRLEGYIIGFDEFMNVVFDEAEEVNMKTKGRNKIGRILLKGDNITLIHAAAQEA</sequence>
<name>RUXE_CAEBR</name>
<protein>
    <recommendedName>
        <fullName>Probable small nuclear ribonucleoprotein E</fullName>
        <shortName>snRNP-E</shortName>
    </recommendedName>
    <alternativeName>
        <fullName>Sm protein E</fullName>
        <shortName>Sm-E</shortName>
        <shortName>SmE</shortName>
    </alternativeName>
</protein>
<comment type="function">
    <text evidence="1">Plays a role in pre-mRNA splicing as a core component of the spliceosomal U1, U2, U4 and U5 small nuclear ribonucleoproteins (snRNPs), the building blocks of the spliceosome.</text>
</comment>
<comment type="subunit">
    <text evidence="1">Core component of the spliceosomal U1, U2, U4 and U5 small nuclear ribonucleoproteins (snRNPs), the building blocks of the spliceosome.</text>
</comment>
<comment type="subcellular location">
    <subcellularLocation>
        <location evidence="1">Nucleus</location>
    </subcellularLocation>
    <subcellularLocation>
        <location evidence="1">Cytoplasm</location>
        <location evidence="1">Cytosol</location>
    </subcellularLocation>
</comment>
<comment type="similarity">
    <text evidence="3">Belongs to the snRNP Sm proteins family.</text>
</comment>
<accession>A8XDT0</accession>
<reference key="1">
    <citation type="journal article" date="2003" name="PLoS Biol.">
        <title>The genome sequence of Caenorhabditis briggsae: a platform for comparative genomics.</title>
        <authorList>
            <person name="Stein L.D."/>
            <person name="Bao Z."/>
            <person name="Blasiar D."/>
            <person name="Blumenthal T."/>
            <person name="Brent M.R."/>
            <person name="Chen N."/>
            <person name="Chinwalla A."/>
            <person name="Clarke L."/>
            <person name="Clee C."/>
            <person name="Coghlan A."/>
            <person name="Coulson A."/>
            <person name="D'Eustachio P."/>
            <person name="Fitch D.H.A."/>
            <person name="Fulton L.A."/>
            <person name="Fulton R.E."/>
            <person name="Griffiths-Jones S."/>
            <person name="Harris T.W."/>
            <person name="Hillier L.W."/>
            <person name="Kamath R."/>
            <person name="Kuwabara P.E."/>
            <person name="Mardis E.R."/>
            <person name="Marra M.A."/>
            <person name="Miner T.L."/>
            <person name="Minx P."/>
            <person name="Mullikin J.C."/>
            <person name="Plumb R.W."/>
            <person name="Rogers J."/>
            <person name="Schein J.E."/>
            <person name="Sohrmann M."/>
            <person name="Spieth J."/>
            <person name="Stajich J.E."/>
            <person name="Wei C."/>
            <person name="Willey D."/>
            <person name="Wilson R.K."/>
            <person name="Durbin R.M."/>
            <person name="Waterston R.H."/>
        </authorList>
    </citation>
    <scope>NUCLEOTIDE SEQUENCE [LARGE SCALE GENOMIC DNA]</scope>
    <source>
        <strain>AF16</strain>
    </source>
</reference>
<gene>
    <name type="primary">snr-6</name>
    <name type="ORF">CBG11756</name>
</gene>
<dbReference type="EMBL" id="HE601289">
    <property type="protein sequence ID" value="CAP30825.1"/>
    <property type="molecule type" value="Genomic_DNA"/>
</dbReference>
<dbReference type="SMR" id="A8XDT0"/>
<dbReference type="FunCoup" id="A8XDT0">
    <property type="interactions" value="2265"/>
</dbReference>
<dbReference type="STRING" id="6238.A8XDT0"/>
<dbReference type="EnsemblMetazoa" id="CBG11756.1">
    <property type="protein sequence ID" value="CBG11756.1"/>
    <property type="gene ID" value="WBGene00032831"/>
</dbReference>
<dbReference type="KEGG" id="cbr:CBG_11756"/>
<dbReference type="CTD" id="8582999"/>
<dbReference type="WormBase" id="CBG11756">
    <property type="protein sequence ID" value="CBP02878"/>
    <property type="gene ID" value="WBGene00032831"/>
    <property type="gene designation" value="Cbr-snr-6"/>
</dbReference>
<dbReference type="eggNOG" id="KOG1774">
    <property type="taxonomic scope" value="Eukaryota"/>
</dbReference>
<dbReference type="HOGENOM" id="CLU_125186_1_0_1"/>
<dbReference type="InParanoid" id="A8XDT0"/>
<dbReference type="OMA" id="VPPINCI"/>
<dbReference type="OrthoDB" id="25620at2759"/>
<dbReference type="Proteomes" id="UP000008549">
    <property type="component" value="Unassembled WGS sequence"/>
</dbReference>
<dbReference type="GO" id="GO:0005829">
    <property type="term" value="C:cytosol"/>
    <property type="evidence" value="ECO:0007669"/>
    <property type="project" value="UniProtKB-SubCell"/>
</dbReference>
<dbReference type="GO" id="GO:0043186">
    <property type="term" value="C:P granule"/>
    <property type="evidence" value="ECO:0007669"/>
    <property type="project" value="EnsemblMetazoa"/>
</dbReference>
<dbReference type="GO" id="GO:0034715">
    <property type="term" value="C:pICln-Sm protein complex"/>
    <property type="evidence" value="ECO:0000318"/>
    <property type="project" value="GO_Central"/>
</dbReference>
<dbReference type="GO" id="GO:0071011">
    <property type="term" value="C:precatalytic spliceosome"/>
    <property type="evidence" value="ECO:0000318"/>
    <property type="project" value="GO_Central"/>
</dbReference>
<dbReference type="GO" id="GO:0005685">
    <property type="term" value="C:U1 snRNP"/>
    <property type="evidence" value="ECO:0000318"/>
    <property type="project" value="GO_Central"/>
</dbReference>
<dbReference type="GO" id="GO:0005686">
    <property type="term" value="C:U2 snRNP"/>
    <property type="evidence" value="ECO:0000318"/>
    <property type="project" value="GO_Central"/>
</dbReference>
<dbReference type="GO" id="GO:0005687">
    <property type="term" value="C:U4 snRNP"/>
    <property type="evidence" value="ECO:0000318"/>
    <property type="project" value="GO_Central"/>
</dbReference>
<dbReference type="GO" id="GO:0046540">
    <property type="term" value="C:U4/U6 x U5 tri-snRNP complex"/>
    <property type="evidence" value="ECO:0000318"/>
    <property type="project" value="GO_Central"/>
</dbReference>
<dbReference type="GO" id="GO:0005682">
    <property type="term" value="C:U5 snRNP"/>
    <property type="evidence" value="ECO:0000318"/>
    <property type="project" value="GO_Central"/>
</dbReference>
<dbReference type="GO" id="GO:0003723">
    <property type="term" value="F:RNA binding"/>
    <property type="evidence" value="ECO:0007669"/>
    <property type="project" value="UniProtKB-KW"/>
</dbReference>
<dbReference type="GO" id="GO:0000387">
    <property type="term" value="P:spliceosomal snRNP assembly"/>
    <property type="evidence" value="ECO:0000318"/>
    <property type="project" value="GO_Central"/>
</dbReference>
<dbReference type="CDD" id="cd01718">
    <property type="entry name" value="Sm_E"/>
    <property type="match status" value="1"/>
</dbReference>
<dbReference type="FunFam" id="2.30.30.100:FF:000013">
    <property type="entry name" value="Small nuclear ribonucleoprotein E"/>
    <property type="match status" value="1"/>
</dbReference>
<dbReference type="Gene3D" id="2.30.30.100">
    <property type="match status" value="1"/>
</dbReference>
<dbReference type="InterPro" id="IPR010920">
    <property type="entry name" value="LSM_dom_sf"/>
</dbReference>
<dbReference type="InterPro" id="IPR047575">
    <property type="entry name" value="Sm"/>
</dbReference>
<dbReference type="InterPro" id="IPR001163">
    <property type="entry name" value="Sm_dom_euk/arc"/>
</dbReference>
<dbReference type="InterPro" id="IPR027078">
    <property type="entry name" value="snRNP-E"/>
</dbReference>
<dbReference type="PANTHER" id="PTHR11193">
    <property type="entry name" value="SMALL NUCLEAR RIBONUCLEOPROTEIN E"/>
    <property type="match status" value="1"/>
</dbReference>
<dbReference type="Pfam" id="PF01423">
    <property type="entry name" value="LSM"/>
    <property type="match status" value="1"/>
</dbReference>
<dbReference type="SMART" id="SM00651">
    <property type="entry name" value="Sm"/>
    <property type="match status" value="1"/>
</dbReference>
<dbReference type="SUPFAM" id="SSF50182">
    <property type="entry name" value="Sm-like ribonucleoproteins"/>
    <property type="match status" value="1"/>
</dbReference>
<dbReference type="PROSITE" id="PS52002">
    <property type="entry name" value="SM"/>
    <property type="match status" value="1"/>
</dbReference>